<dbReference type="EC" id="2.7.1.-" evidence="3"/>
<dbReference type="EMBL" id="AP008226">
    <property type="protein sequence ID" value="BAD71002.1"/>
    <property type="molecule type" value="Genomic_DNA"/>
</dbReference>
<dbReference type="RefSeq" id="WP_011228495.1">
    <property type="nucleotide sequence ID" value="NC_006461.1"/>
</dbReference>
<dbReference type="RefSeq" id="YP_144445.1">
    <property type="nucleotide sequence ID" value="NC_006461.1"/>
</dbReference>
<dbReference type="SMR" id="Q5SJ35"/>
<dbReference type="EnsemblBacteria" id="BAD71002">
    <property type="protein sequence ID" value="BAD71002"/>
    <property type="gene ID" value="BAD71002"/>
</dbReference>
<dbReference type="GeneID" id="3168142"/>
<dbReference type="KEGG" id="ttj:TTHA1179"/>
<dbReference type="PATRIC" id="fig|300852.9.peg.1159"/>
<dbReference type="eggNOG" id="COG3001">
    <property type="taxonomic scope" value="Bacteria"/>
</dbReference>
<dbReference type="HOGENOM" id="CLU_036517_0_1_0"/>
<dbReference type="PhylomeDB" id="Q5SJ35"/>
<dbReference type="Proteomes" id="UP000000532">
    <property type="component" value="Chromosome"/>
</dbReference>
<dbReference type="GO" id="GO:0005524">
    <property type="term" value="F:ATP binding"/>
    <property type="evidence" value="ECO:0007669"/>
    <property type="project" value="UniProtKB-KW"/>
</dbReference>
<dbReference type="GO" id="GO:0016301">
    <property type="term" value="F:kinase activity"/>
    <property type="evidence" value="ECO:0007669"/>
    <property type="project" value="UniProtKB-KW"/>
</dbReference>
<dbReference type="GO" id="GO:0016773">
    <property type="term" value="F:phosphotransferase activity, alcohol group as acceptor"/>
    <property type="evidence" value="ECO:0000314"/>
    <property type="project" value="UniProtKB"/>
</dbReference>
<dbReference type="GO" id="GO:0102193">
    <property type="term" value="F:protein-ribulosamine 3-kinase activity"/>
    <property type="evidence" value="ECO:0007669"/>
    <property type="project" value="RHEA"/>
</dbReference>
<dbReference type="Gene3D" id="3.90.1200.10">
    <property type="match status" value="1"/>
</dbReference>
<dbReference type="Gene3D" id="3.30.200.20">
    <property type="entry name" value="Phosphorylase Kinase, domain 1"/>
    <property type="match status" value="1"/>
</dbReference>
<dbReference type="InterPro" id="IPR016477">
    <property type="entry name" value="Fructo-/Ketosamine-3-kinase"/>
</dbReference>
<dbReference type="InterPro" id="IPR011009">
    <property type="entry name" value="Kinase-like_dom_sf"/>
</dbReference>
<dbReference type="PANTHER" id="PTHR12149">
    <property type="entry name" value="FRUCTOSAMINE 3 KINASE-RELATED PROTEIN"/>
    <property type="match status" value="1"/>
</dbReference>
<dbReference type="PANTHER" id="PTHR12149:SF8">
    <property type="entry name" value="PROTEIN-RIBULOSAMINE 3-KINASE"/>
    <property type="match status" value="1"/>
</dbReference>
<dbReference type="Pfam" id="PF03881">
    <property type="entry name" value="Fructosamin_kin"/>
    <property type="match status" value="1"/>
</dbReference>
<dbReference type="PIRSF" id="PIRSF006221">
    <property type="entry name" value="Ketosamine-3-kinase"/>
    <property type="match status" value="1"/>
</dbReference>
<dbReference type="SUPFAM" id="SSF56112">
    <property type="entry name" value="Protein kinase-like (PK-like)"/>
    <property type="match status" value="1"/>
</dbReference>
<accession>Q5SJ35</accession>
<comment type="function">
    <text evidence="3">Ketoamine kinase that phosphorylates ketoamines, such as erythruloselysine and ribuloselysine, on the third carbon of the sugar moiety to generate ketoamine 3-phosphate (PubMed:17681011). Has higher activity on free lysine (erythruloselysine and ribuloselysine), than on ribuloselysine and erythruloselysine residues on glycated proteins (PubMed:17681011).</text>
</comment>
<comment type="catalytic activity">
    <reaction evidence="3">
        <text>N(6)-(D-ribulosyl)-L-lysine + ATP = N(6)-(3-O-phospho-D-ribulosyl)-L-lysine + ADP + H(+)</text>
        <dbReference type="Rhea" id="RHEA:61400"/>
        <dbReference type="ChEBI" id="CHEBI:15378"/>
        <dbReference type="ChEBI" id="CHEBI:30616"/>
        <dbReference type="ChEBI" id="CHEBI:144590"/>
        <dbReference type="ChEBI" id="CHEBI:144611"/>
        <dbReference type="ChEBI" id="CHEBI:456216"/>
    </reaction>
    <physiologicalReaction direction="left-to-right" evidence="3">
        <dbReference type="Rhea" id="RHEA:61401"/>
    </physiologicalReaction>
</comment>
<comment type="catalytic activity">
    <reaction evidence="3">
        <text>N(6)-(D-erythrulosyl)-L-lysine + ATP = N(6)-(3-O-phospho-D-erythrulosyl)-L-lysine + ADP + H(+)</text>
        <dbReference type="Rhea" id="RHEA:61408"/>
        <dbReference type="ChEBI" id="CHEBI:15378"/>
        <dbReference type="ChEBI" id="CHEBI:30616"/>
        <dbReference type="ChEBI" id="CHEBI:144617"/>
        <dbReference type="ChEBI" id="CHEBI:144618"/>
        <dbReference type="ChEBI" id="CHEBI:456216"/>
    </reaction>
    <physiologicalReaction direction="left-to-right" evidence="3">
        <dbReference type="Rhea" id="RHEA:61409"/>
    </physiologicalReaction>
</comment>
<comment type="catalytic activity">
    <reaction evidence="3">
        <text>N(6)-D-ribulosyl-L-lysyl-[protein] + ATP = N(6)-(3-O-phospho-D-ribulosyl)-L-lysyl-[protein] + ADP + H(+)</text>
        <dbReference type="Rhea" id="RHEA:48432"/>
        <dbReference type="Rhea" id="RHEA-COMP:12103"/>
        <dbReference type="Rhea" id="RHEA-COMP:12104"/>
        <dbReference type="ChEBI" id="CHEBI:15378"/>
        <dbReference type="ChEBI" id="CHEBI:30616"/>
        <dbReference type="ChEBI" id="CHEBI:90418"/>
        <dbReference type="ChEBI" id="CHEBI:90420"/>
        <dbReference type="ChEBI" id="CHEBI:456216"/>
    </reaction>
    <physiologicalReaction direction="left-to-right" evidence="3">
        <dbReference type="Rhea" id="RHEA:48433"/>
    </physiologicalReaction>
</comment>
<comment type="catalytic activity">
    <reaction evidence="3">
        <text>N(6)-(D-erythrulosyl)-L-lysyl-[protein] + ATP = N(6)-(3-O-phospho-D-erythrulosyl)-L-lysyl-[protein] + ADP + H(+)</text>
        <dbReference type="Rhea" id="RHEA:61396"/>
        <dbReference type="Rhea" id="RHEA-COMP:15794"/>
        <dbReference type="Rhea" id="RHEA-COMP:15799"/>
        <dbReference type="ChEBI" id="CHEBI:15378"/>
        <dbReference type="ChEBI" id="CHEBI:30616"/>
        <dbReference type="ChEBI" id="CHEBI:144587"/>
        <dbReference type="ChEBI" id="CHEBI:144624"/>
        <dbReference type="ChEBI" id="CHEBI:456216"/>
    </reaction>
    <physiologicalReaction direction="left-to-right" evidence="3">
        <dbReference type="Rhea" id="RHEA:61397"/>
    </physiologicalReaction>
</comment>
<comment type="biophysicochemical properties">
    <kinetics>
        <KM evidence="3">58 uM for free ribuloselysine</KM>
        <KM evidence="3">6 uM for free erythruloselysine</KM>
        <Vmax evidence="3">450.0 nmol/min/mg enzyme with free ribuloselysine as substrate</Vmax>
        <Vmax evidence="3">770.0 nmol/min/mg enzyme with free erythruloselysine as substrate</Vmax>
        <Vmax evidence="3">7.0 nmol/min/mg enzyme with ribuloselysyl-protein (lysozyme) as substrate</Vmax>
        <Vmax evidence="3">4.2 nmol/min/mg enzyme with erythruloselysyl-protein (lysozyme) as substrate</Vmax>
    </kinetics>
</comment>
<comment type="similarity">
    <text evidence="4">Belongs to the fructosamine kinase family.</text>
</comment>
<protein>
    <recommendedName>
        <fullName evidence="4">Probable ketoamine kinase TTHA1179</fullName>
        <ecNumber evidence="3">2.7.1.-</ecNumber>
    </recommendedName>
</protein>
<name>KT3K_THET8</name>
<feature type="chain" id="PRO_0000448293" description="Probable ketoamine kinase TTHA1179">
    <location>
        <begin position="1"/>
        <end position="262"/>
    </location>
</feature>
<feature type="active site" description="Proton acceptor" evidence="1">
    <location>
        <position position="172"/>
    </location>
</feature>
<feature type="binding site" evidence="2">
    <location>
        <begin position="79"/>
        <end position="81"/>
    </location>
    <ligand>
        <name>ATP</name>
        <dbReference type="ChEBI" id="CHEBI:30616"/>
    </ligand>
</feature>
<evidence type="ECO:0000250" key="1">
    <source>
        <dbReference type="UniProtKB" id="P9WI99"/>
    </source>
</evidence>
<evidence type="ECO:0000250" key="2">
    <source>
        <dbReference type="UniProtKB" id="Q9HA64"/>
    </source>
</evidence>
<evidence type="ECO:0000269" key="3">
    <source>
    </source>
</evidence>
<evidence type="ECO:0000305" key="4"/>
<organism>
    <name type="scientific">Thermus thermophilus (strain ATCC 27634 / DSM 579 / HB8)</name>
    <dbReference type="NCBI Taxonomy" id="300852"/>
    <lineage>
        <taxon>Bacteria</taxon>
        <taxon>Thermotogati</taxon>
        <taxon>Deinococcota</taxon>
        <taxon>Deinococci</taxon>
        <taxon>Thermales</taxon>
        <taxon>Thermaceae</taxon>
        <taxon>Thermus</taxon>
    </lineage>
</organism>
<keyword id="KW-0067">ATP-binding</keyword>
<keyword id="KW-0418">Kinase</keyword>
<keyword id="KW-0547">Nucleotide-binding</keyword>
<keyword id="KW-1185">Reference proteome</keyword>
<keyword id="KW-0808">Transferase</keyword>
<reference key="1">
    <citation type="submission" date="2004-11" db="EMBL/GenBank/DDBJ databases">
        <title>Complete genome sequence of Thermus thermophilus HB8.</title>
        <authorList>
            <person name="Masui R."/>
            <person name="Kurokawa K."/>
            <person name="Nakagawa N."/>
            <person name="Tokunaga F."/>
            <person name="Koyama Y."/>
            <person name="Shibata T."/>
            <person name="Oshima T."/>
            <person name="Yokoyama S."/>
            <person name="Yasunaga T."/>
            <person name="Kuramitsu S."/>
        </authorList>
    </citation>
    <scope>NUCLEOTIDE SEQUENCE [LARGE SCALE GENOMIC DNA]</scope>
    <source>
        <strain>ATCC 27634 / DSM 579 / HB8</strain>
    </source>
</reference>
<reference key="2">
    <citation type="journal article" date="2007" name="FEBS J.">
        <title>Many fructosamine 3-kinase homologues in bacteria are ribulosamine/erythrulosamine 3-kinases potentially involved in protein deglycation.</title>
        <authorList>
            <person name="Gemayel R."/>
            <person name="Fortpied J."/>
            <person name="Rzem R."/>
            <person name="Vertommen D."/>
            <person name="Veiga-da-Cunha M."/>
            <person name="Van Schaftingen E."/>
        </authorList>
    </citation>
    <scope>FUNCTION</scope>
    <scope>CATALYTIC ACTIVITY</scope>
    <scope>BIOPHYSICOCHEMICAL PROPERTIES</scope>
</reference>
<proteinExistence type="evidence at protein level"/>
<gene>
    <name type="ordered locus">TTHA1179</name>
</gene>
<sequence length="262" mass="29325">MDPLALLRKAGLEAEGPALPLHGGDISRVWRVGRFVVKTAQDPPPGLFRAEARGLQALAERGVRVPRVHWVGEEGLVLAYLEPGPEDWEGLARTLAALHRRREGSYLAEPGFLGTFPLPGREGGEWTAFFYERCVLPLLEATWDRLQGLGPKVEALYQRPLPAEGPAPLHGDLWHGNVYFAREGPALLDPSFFVGERGVDLAMMRLFGGFPRRFWEVYGELYPVPEEVERALPRYQVYYLLAHVHFFGQGYLGALWRAISAS</sequence>